<accession>Q6UW78</accession>
<accession>Q5FVD5</accession>
<proteinExistence type="evidence at protein level"/>
<feature type="chain" id="PRO_0000022611" description="Ubiquinol-cytochrome-c reductase complex assembly factor 3">
    <location>
        <begin position="1"/>
        <end position="93"/>
    </location>
</feature>
<feature type="topological domain" description="Mitochondrial matrix" evidence="2 6">
    <location>
        <begin position="1"/>
        <end position="7"/>
    </location>
</feature>
<feature type="transmembrane region" description="Helical" evidence="2">
    <location>
        <begin position="8"/>
        <end position="28"/>
    </location>
</feature>
<feature type="topological domain" description="Mitochondrial intermembrane" evidence="2 3 4">
    <location>
        <begin position="29"/>
        <end position="93"/>
    </location>
</feature>
<feature type="region of interest" description="Mediates lipid-binding" evidence="4">
    <location>
        <begin position="23"/>
        <end position="80"/>
    </location>
</feature>
<feature type="sequence variant" id="VAR_071864" description="In MC3DN9; decreases protein abundance; reduces complex III formation; reduces complex III activity; dbSNP:rs606231426." evidence="3">
    <original>V</original>
    <variation>E</variation>
    <location>
        <position position="20"/>
    </location>
</feature>
<feature type="mutagenesis site" description="Loss of localization to the mitochondria." evidence="4">
    <original>RK</original>
    <variation>AA</variation>
    <variation>DD</variation>
    <location>
        <begin position="5"/>
        <end position="6"/>
    </location>
</feature>
<feature type="sequence conflict" description="In Ref. 1; AAQ89294 and 3; AAH90057." evidence="7" ref="1 3">
    <original>G</original>
    <variation>S</variation>
    <location>
        <position position="89"/>
    </location>
</feature>
<sequence length="93" mass="10081">MDSLRKMLISVAMLGAGAGVGYALLVIVTPGERRKQEMLKEMPLQDPRSREEAARTQQLLLATLQEAATTQENVAWRKNWMVGGEGGAGGRSP</sequence>
<protein>
    <recommendedName>
        <fullName evidence="8">Ubiquinol-cytochrome-c reductase complex assembly factor 3</fullName>
    </recommendedName>
    <alternativeName>
        <fullName evidence="6">Assembly factor CBP4 homolog</fullName>
    </alternativeName>
</protein>
<gene>
    <name evidence="8" type="primary">UQCC3</name>
    <name evidence="8" type="synonym">C11orf83</name>
    <name type="ORF">UNQ655/PRO1286</name>
</gene>
<comment type="function">
    <text evidence="3 4">Required for the assembly of the ubiquinol-cytochrome c reductase complex (mitochondrial respiratory chain complex III or cytochrome b-c1 complex), mediating cytochrome b recruitment and probably stabilization within the complex. Thereby, plays an important role in ATP production by mitochondria. Cardiolipin-binding protein, it may also control the cardiolipin composition of mitochondria membranes and their morphology.</text>
</comment>
<comment type="subunit">
    <text evidence="1 4">Associates with the ubiquinol-cytochrome c reductase complex (mitochondrial respiratory chain complex III or cytochrome b-c1 complex). Interacts with UQCC1. Forms a complex, named COMC, composed of UQCC1, UQCC2; UQCC3 and UQCC4; mediates MT-CYB hemylation and association with the first nuclear-encoded complex III subunit UQCRQ (By similarity).</text>
</comment>
<comment type="subcellular location">
    <subcellularLocation>
        <location evidence="3 4">Mitochondrion inner membrane</location>
        <topology evidence="3 4">Single-pass membrane protein</topology>
    </subcellularLocation>
</comment>
<comment type="PTM">
    <text evidence="4">Probably cleaved by OMA1 under mitochondrial stress conditions.</text>
</comment>
<comment type="disease" evidence="3">
    <disease id="DI-04284">
        <name>Mitochondrial complex III deficiency, nuclear type 9</name>
        <acronym>MC3DN9</acronym>
        <description>A form of mitochondrial complex III deficiency, a disorder of the mitochondrial respiratory chain resulting in a highly variable phenotype depending on which tissues are affected. MC3DN9 clinical features include feeding difficulties, hypoglycemia, severe lactic acidosis, and delayed psychomotor development.</description>
        <dbReference type="MIM" id="616111"/>
    </disease>
    <text>The disease is caused by variants affecting the gene represented in this entry.</text>
</comment>
<comment type="similarity">
    <text evidence="7">Belongs to the UQCC3 family.</text>
</comment>
<comment type="caution">
    <text evidence="3 4 5">Was initially reported to be secreted (PubMed:15340161). However, it was later shown to be localized in the inner mitochondrial membrane (PubMed:25008109, PubMed:25605331).</text>
</comment>
<evidence type="ECO:0000250" key="1">
    <source>
        <dbReference type="UniProtKB" id="Q8K2T4"/>
    </source>
</evidence>
<evidence type="ECO:0000255" key="2"/>
<evidence type="ECO:0000269" key="3">
    <source>
    </source>
</evidence>
<evidence type="ECO:0000269" key="4">
    <source>
    </source>
</evidence>
<evidence type="ECO:0000303" key="5">
    <source>
    </source>
</evidence>
<evidence type="ECO:0000303" key="6">
    <source>
    </source>
</evidence>
<evidence type="ECO:0000305" key="7"/>
<evidence type="ECO:0000312" key="8">
    <source>
        <dbReference type="HGNC" id="HGNC:34399"/>
    </source>
</evidence>
<keyword id="KW-0066">ATP synthesis</keyword>
<keyword id="KW-0903">Direct protein sequencing</keyword>
<keyword id="KW-0225">Disease variant</keyword>
<keyword id="KW-0472">Membrane</keyword>
<keyword id="KW-0496">Mitochondrion</keyword>
<keyword id="KW-0999">Mitochondrion inner membrane</keyword>
<keyword id="KW-1274">Primary mitochondrial disease</keyword>
<keyword id="KW-1267">Proteomics identification</keyword>
<keyword id="KW-1185">Reference proteome</keyword>
<keyword id="KW-0812">Transmembrane</keyword>
<keyword id="KW-1133">Transmembrane helix</keyword>
<reference key="1">
    <citation type="journal article" date="2003" name="Genome Res.">
        <title>The secreted protein discovery initiative (SPDI), a large-scale effort to identify novel human secreted and transmembrane proteins: a bioinformatics assessment.</title>
        <authorList>
            <person name="Clark H.F."/>
            <person name="Gurney A.L."/>
            <person name="Abaya E."/>
            <person name="Baker K."/>
            <person name="Baldwin D.T."/>
            <person name="Brush J."/>
            <person name="Chen J."/>
            <person name="Chow B."/>
            <person name="Chui C."/>
            <person name="Crowley C."/>
            <person name="Currell B."/>
            <person name="Deuel B."/>
            <person name="Dowd P."/>
            <person name="Eaton D."/>
            <person name="Foster J.S."/>
            <person name="Grimaldi C."/>
            <person name="Gu Q."/>
            <person name="Hass P.E."/>
            <person name="Heldens S."/>
            <person name="Huang A."/>
            <person name="Kim H.S."/>
            <person name="Klimowski L."/>
            <person name="Jin Y."/>
            <person name="Johnson S."/>
            <person name="Lee J."/>
            <person name="Lewis L."/>
            <person name="Liao D."/>
            <person name="Mark M.R."/>
            <person name="Robbie E."/>
            <person name="Sanchez C."/>
            <person name="Schoenfeld J."/>
            <person name="Seshagiri S."/>
            <person name="Simmons L."/>
            <person name="Singh J."/>
            <person name="Smith V."/>
            <person name="Stinson J."/>
            <person name="Vagts A."/>
            <person name="Vandlen R.L."/>
            <person name="Watanabe C."/>
            <person name="Wieand D."/>
            <person name="Woods K."/>
            <person name="Xie M.-H."/>
            <person name="Yansura D.G."/>
            <person name="Yi S."/>
            <person name="Yu G."/>
            <person name="Yuan J."/>
            <person name="Zhang M."/>
            <person name="Zhang Z."/>
            <person name="Goddard A.D."/>
            <person name="Wood W.I."/>
            <person name="Godowski P.J."/>
            <person name="Gray A.M."/>
        </authorList>
    </citation>
    <scope>NUCLEOTIDE SEQUENCE [LARGE SCALE MRNA]</scope>
</reference>
<reference key="2">
    <citation type="journal article" date="2006" name="Nature">
        <title>Human chromosome 11 DNA sequence and analysis including novel gene identification.</title>
        <authorList>
            <person name="Taylor T.D."/>
            <person name="Noguchi H."/>
            <person name="Totoki Y."/>
            <person name="Toyoda A."/>
            <person name="Kuroki Y."/>
            <person name="Dewar K."/>
            <person name="Lloyd C."/>
            <person name="Itoh T."/>
            <person name="Takeda T."/>
            <person name="Kim D.-W."/>
            <person name="She X."/>
            <person name="Barlow K.F."/>
            <person name="Bloom T."/>
            <person name="Bruford E."/>
            <person name="Chang J.L."/>
            <person name="Cuomo C.A."/>
            <person name="Eichler E."/>
            <person name="FitzGerald M.G."/>
            <person name="Jaffe D.B."/>
            <person name="LaButti K."/>
            <person name="Nicol R."/>
            <person name="Park H.-S."/>
            <person name="Seaman C."/>
            <person name="Sougnez C."/>
            <person name="Yang X."/>
            <person name="Zimmer A.R."/>
            <person name="Zody M.C."/>
            <person name="Birren B.W."/>
            <person name="Nusbaum C."/>
            <person name="Fujiyama A."/>
            <person name="Hattori M."/>
            <person name="Rogers J."/>
            <person name="Lander E.S."/>
            <person name="Sakaki Y."/>
        </authorList>
    </citation>
    <scope>NUCLEOTIDE SEQUENCE [LARGE SCALE GENOMIC DNA]</scope>
</reference>
<reference key="3">
    <citation type="journal article" date="2004" name="Genome Res.">
        <title>The status, quality, and expansion of the NIH full-length cDNA project: the Mammalian Gene Collection (MGC).</title>
        <authorList>
            <consortium name="The MGC Project Team"/>
        </authorList>
    </citation>
    <scope>NUCLEOTIDE SEQUENCE [LARGE SCALE MRNA]</scope>
    <source>
        <tissue>Placenta</tissue>
    </source>
</reference>
<reference key="4">
    <citation type="journal article" date="2004" name="Protein Sci.">
        <title>Signal peptide prediction based on analysis of experimentally verified cleavage sites.</title>
        <authorList>
            <person name="Zhang Z."/>
            <person name="Henzel W.J."/>
        </authorList>
    </citation>
    <scope>PROTEIN SEQUENCE OF 24-37</scope>
    <scope>CAUTION</scope>
</reference>
<reference key="5">
    <citation type="journal article" date="2014" name="Hum. Mol. Genet.">
        <title>A mutation in the human CBP4 ortholog UQCC3 impairs complex III assembly, activity and cytochrome b stability.</title>
        <authorList>
            <person name="Wanschers B.F."/>
            <person name="Szklarczyk R."/>
            <person name="van den Brand M.A."/>
            <person name="Jonckheere A."/>
            <person name="Suijskens J."/>
            <person name="Smeets R."/>
            <person name="Rodenburg R.J."/>
            <person name="Stephan K."/>
            <person name="Helland I.B."/>
            <person name="Elkamil A."/>
            <person name="Rootwelt T."/>
            <person name="Ott M."/>
            <person name="van den Heuvel L."/>
            <person name="Nijtmans L.G."/>
            <person name="Huynen M.A."/>
        </authorList>
    </citation>
    <scope>INVOLVEMENT IN MC3DN9</scope>
    <scope>FUNCTION</scope>
    <scope>SUBCELLULAR LOCATION</scope>
    <scope>TOPOLOGY</scope>
    <scope>CAUTION</scope>
    <scope>VARIANT MC3DN9 GLU-20</scope>
</reference>
<reference key="6">
    <citation type="journal article" date="2015" name="Mol. Cell. Biol.">
        <title>C11orf83, a mitochondrial cardiolipin-binding protein involved in bc1 complex assembly and supercomplex stabilization.</title>
        <authorList>
            <person name="Desmurs M."/>
            <person name="Foti M."/>
            <person name="Raemy E."/>
            <person name="Vaz F.M."/>
            <person name="Martinou J.C."/>
            <person name="Bairoch A."/>
            <person name="Lane L."/>
        </authorList>
    </citation>
    <scope>FUNCTION</scope>
    <scope>LIPID-BINDING</scope>
    <scope>SUBUNIT</scope>
    <scope>SUBCELLULAR LOCATION</scope>
    <scope>TOPOLOGY</scope>
    <scope>PROTEOLYTIC PROCESSING</scope>
    <scope>CAUTION</scope>
    <scope>MUTAGENESIS OF 5-ARG-LYS-6</scope>
    <scope>REGION</scope>
</reference>
<name>UQCC3_HUMAN</name>
<organism>
    <name type="scientific">Homo sapiens</name>
    <name type="common">Human</name>
    <dbReference type="NCBI Taxonomy" id="9606"/>
    <lineage>
        <taxon>Eukaryota</taxon>
        <taxon>Metazoa</taxon>
        <taxon>Chordata</taxon>
        <taxon>Craniata</taxon>
        <taxon>Vertebrata</taxon>
        <taxon>Euteleostomi</taxon>
        <taxon>Mammalia</taxon>
        <taxon>Eutheria</taxon>
        <taxon>Euarchontoglires</taxon>
        <taxon>Primates</taxon>
        <taxon>Haplorrhini</taxon>
        <taxon>Catarrhini</taxon>
        <taxon>Hominidae</taxon>
        <taxon>Homo</taxon>
    </lineage>
</organism>
<dbReference type="EMBL" id="AY358935">
    <property type="protein sequence ID" value="AAQ89294.1"/>
    <property type="molecule type" value="mRNA"/>
</dbReference>
<dbReference type="EMBL" id="AP001458">
    <property type="status" value="NOT_ANNOTATED_CDS"/>
    <property type="molecule type" value="Genomic_DNA"/>
</dbReference>
<dbReference type="EMBL" id="BC090057">
    <property type="protein sequence ID" value="AAH90057.1"/>
    <property type="molecule type" value="mRNA"/>
</dbReference>
<dbReference type="CCDS" id="CCDS41658.1"/>
<dbReference type="RefSeq" id="NP_001078841.1">
    <property type="nucleotide sequence ID" value="NM_001085372.3"/>
</dbReference>
<dbReference type="SMR" id="Q6UW78"/>
<dbReference type="BioGRID" id="612915">
    <property type="interactions" value="33"/>
</dbReference>
<dbReference type="FunCoup" id="Q6UW78">
    <property type="interactions" value="828"/>
</dbReference>
<dbReference type="IntAct" id="Q6UW78">
    <property type="interactions" value="6"/>
</dbReference>
<dbReference type="STRING" id="9606.ENSP00000432692"/>
<dbReference type="GlyGen" id="Q6UW78">
    <property type="glycosylation" value="6 sites, 1 O-linked glycan (6 sites)"/>
</dbReference>
<dbReference type="iPTMnet" id="Q6UW78"/>
<dbReference type="PhosphoSitePlus" id="Q6UW78"/>
<dbReference type="BioMuta" id="UQCC3"/>
<dbReference type="DMDM" id="296434449"/>
<dbReference type="jPOST" id="Q6UW78"/>
<dbReference type="MassIVE" id="Q6UW78"/>
<dbReference type="PaxDb" id="9606-ENSP00000432692"/>
<dbReference type="PeptideAtlas" id="Q6UW78"/>
<dbReference type="ProteomicsDB" id="67454"/>
<dbReference type="Pumba" id="Q6UW78"/>
<dbReference type="TopDownProteomics" id="Q6UW78"/>
<dbReference type="Antibodypedia" id="63885">
    <property type="antibodies" value="10 antibodies from 9 providers"/>
</dbReference>
<dbReference type="DNASU" id="790955"/>
<dbReference type="Ensembl" id="ENST00000377953.4">
    <property type="protein sequence ID" value="ENSP00000367189.3"/>
    <property type="gene ID" value="ENSG00000204922.5"/>
</dbReference>
<dbReference type="Ensembl" id="ENST00000531323.1">
    <property type="protein sequence ID" value="ENSP00000432692.1"/>
    <property type="gene ID" value="ENSG00000204922.5"/>
</dbReference>
<dbReference type="GeneID" id="790955"/>
<dbReference type="KEGG" id="hsa:790955"/>
<dbReference type="MANE-Select" id="ENST00000377953.4">
    <property type="protein sequence ID" value="ENSP00000367189.3"/>
    <property type="RefSeq nucleotide sequence ID" value="NM_001085372.3"/>
    <property type="RefSeq protein sequence ID" value="NP_001078841.1"/>
</dbReference>
<dbReference type="UCSC" id="uc001nui.5">
    <property type="organism name" value="human"/>
</dbReference>
<dbReference type="AGR" id="HGNC:34399"/>
<dbReference type="CTD" id="790955"/>
<dbReference type="DisGeNET" id="790955"/>
<dbReference type="GeneCards" id="UQCC3"/>
<dbReference type="HGNC" id="HGNC:34399">
    <property type="gene designation" value="UQCC3"/>
</dbReference>
<dbReference type="HPA" id="ENSG00000204922">
    <property type="expression patterns" value="Low tissue specificity"/>
</dbReference>
<dbReference type="MalaCards" id="UQCC3"/>
<dbReference type="MIM" id="616097">
    <property type="type" value="gene"/>
</dbReference>
<dbReference type="MIM" id="616111">
    <property type="type" value="phenotype"/>
</dbReference>
<dbReference type="neXtProt" id="NX_Q6UW78"/>
<dbReference type="OpenTargets" id="ENSG00000204922"/>
<dbReference type="Orphanet" id="1460">
    <property type="disease" value="Isolated complex III deficiency"/>
</dbReference>
<dbReference type="PharmGKB" id="PA162377760"/>
<dbReference type="VEuPathDB" id="HostDB:ENSG00000204922"/>
<dbReference type="eggNOG" id="ENOG502S9VI">
    <property type="taxonomic scope" value="Eukaryota"/>
</dbReference>
<dbReference type="GeneTree" id="ENSGT00390000001930"/>
<dbReference type="HOGENOM" id="CLU_184624_0_0_1"/>
<dbReference type="InParanoid" id="Q6UW78"/>
<dbReference type="OMA" id="THENVAW"/>
<dbReference type="PAN-GO" id="Q6UW78">
    <property type="GO annotations" value="3 GO annotations based on evolutionary models"/>
</dbReference>
<dbReference type="PhylomeDB" id="Q6UW78"/>
<dbReference type="TreeFam" id="TF339744"/>
<dbReference type="PathwayCommons" id="Q6UW78"/>
<dbReference type="Reactome" id="R-HSA-9865881">
    <property type="pathway name" value="Complex III assembly"/>
</dbReference>
<dbReference type="SignaLink" id="Q6UW78"/>
<dbReference type="BioGRID-ORCS" id="790955">
    <property type="hits" value="59 hits in 1156 CRISPR screens"/>
</dbReference>
<dbReference type="ChiTaRS" id="UQCC3">
    <property type="organism name" value="human"/>
</dbReference>
<dbReference type="GenomeRNAi" id="790955"/>
<dbReference type="Pharos" id="Q6UW78">
    <property type="development level" value="Tbio"/>
</dbReference>
<dbReference type="PRO" id="PR:Q6UW78"/>
<dbReference type="Proteomes" id="UP000005640">
    <property type="component" value="Chromosome 11"/>
</dbReference>
<dbReference type="RNAct" id="Q6UW78">
    <property type="molecule type" value="protein"/>
</dbReference>
<dbReference type="Bgee" id="ENSG00000204922">
    <property type="expression patterns" value="Expressed in endothelial cell and 179 other cell types or tissues"/>
</dbReference>
<dbReference type="GO" id="GO:0005829">
    <property type="term" value="C:cytosol"/>
    <property type="evidence" value="ECO:0000314"/>
    <property type="project" value="HPA"/>
</dbReference>
<dbReference type="GO" id="GO:0005743">
    <property type="term" value="C:mitochondrial inner membrane"/>
    <property type="evidence" value="ECO:0000314"/>
    <property type="project" value="UniProtKB"/>
</dbReference>
<dbReference type="GO" id="GO:0005739">
    <property type="term" value="C:mitochondrion"/>
    <property type="evidence" value="ECO:0000314"/>
    <property type="project" value="HPA"/>
</dbReference>
<dbReference type="GO" id="GO:0005654">
    <property type="term" value="C:nucleoplasm"/>
    <property type="evidence" value="ECO:0000314"/>
    <property type="project" value="HPA"/>
</dbReference>
<dbReference type="GO" id="GO:1901612">
    <property type="term" value="F:cardiolipin binding"/>
    <property type="evidence" value="ECO:0000314"/>
    <property type="project" value="UniProtKB"/>
</dbReference>
<dbReference type="GO" id="GO:0070300">
    <property type="term" value="F:phosphatidic acid binding"/>
    <property type="evidence" value="ECO:0000314"/>
    <property type="project" value="UniProtKB"/>
</dbReference>
<dbReference type="GO" id="GO:0006754">
    <property type="term" value="P:ATP biosynthetic process"/>
    <property type="evidence" value="ECO:0007669"/>
    <property type="project" value="UniProtKB-KW"/>
</dbReference>
<dbReference type="GO" id="GO:0042407">
    <property type="term" value="P:cristae formation"/>
    <property type="evidence" value="ECO:0000315"/>
    <property type="project" value="UniProtKB"/>
</dbReference>
<dbReference type="GO" id="GO:0006122">
    <property type="term" value="P:mitochondrial electron transport, ubiquinol to cytochrome c"/>
    <property type="evidence" value="ECO:0000315"/>
    <property type="project" value="UniProtKB"/>
</dbReference>
<dbReference type="GO" id="GO:0034551">
    <property type="term" value="P:mitochondrial respiratory chain complex III assembly"/>
    <property type="evidence" value="ECO:0000315"/>
    <property type="project" value="UniProtKB"/>
</dbReference>
<dbReference type="InterPro" id="IPR027896">
    <property type="entry name" value="UQCC3"/>
</dbReference>
<dbReference type="PANTHER" id="PTHR36465">
    <property type="entry name" value="UBIQUINOL-CYTOCHROME-C REDUCTASE COMPLEX ASSEMBLY FACTOR 3"/>
    <property type="match status" value="1"/>
</dbReference>
<dbReference type="PANTHER" id="PTHR36465:SF1">
    <property type="entry name" value="UBIQUINOL-CYTOCHROME-C REDUCTASE COMPLEX ASSEMBLY FACTOR 3"/>
    <property type="match status" value="1"/>
</dbReference>
<dbReference type="Pfam" id="PF15141">
    <property type="entry name" value="UQCC3"/>
    <property type="match status" value="1"/>
</dbReference>